<protein>
    <recommendedName>
        <fullName evidence="1">DNA-directed RNA polymerase subunit omega</fullName>
        <shortName evidence="1">RNAP omega subunit</shortName>
        <ecNumber evidence="1">2.7.7.6</ecNumber>
    </recommendedName>
    <alternativeName>
        <fullName evidence="1">RNA polymerase omega subunit</fullName>
    </alternativeName>
    <alternativeName>
        <fullName evidence="1">Transcriptase subunit omega</fullName>
    </alternativeName>
</protein>
<organism>
    <name type="scientific">Cupriavidus necator (strain ATCC 17699 / DSM 428 / KCTC 22496 / NCIMB 10442 / H16 / Stanier 337)</name>
    <name type="common">Ralstonia eutropha</name>
    <dbReference type="NCBI Taxonomy" id="381666"/>
    <lineage>
        <taxon>Bacteria</taxon>
        <taxon>Pseudomonadati</taxon>
        <taxon>Pseudomonadota</taxon>
        <taxon>Betaproteobacteria</taxon>
        <taxon>Burkholderiales</taxon>
        <taxon>Burkholderiaceae</taxon>
        <taxon>Cupriavidus</taxon>
    </lineage>
</organism>
<sequence length="67" mass="7439">MARITVEDCLKHIPNRFELALAATYRARQLVQGHTPKVEAKDKPTVVALREIASGQVGIEMLKKVPT</sequence>
<dbReference type="EC" id="2.7.7.6" evidence="1"/>
<dbReference type="EMBL" id="AM260479">
    <property type="protein sequence ID" value="CAJ92099.1"/>
    <property type="molecule type" value="Genomic_DNA"/>
</dbReference>
<dbReference type="RefSeq" id="WP_006578656.1">
    <property type="nucleotide sequence ID" value="NZ_CP039287.1"/>
</dbReference>
<dbReference type="SMR" id="Q0KD22"/>
<dbReference type="STRING" id="381666.H16_A0954"/>
<dbReference type="GeneID" id="98342150"/>
<dbReference type="KEGG" id="reh:H16_A0954"/>
<dbReference type="eggNOG" id="COG1758">
    <property type="taxonomic scope" value="Bacteria"/>
</dbReference>
<dbReference type="HOGENOM" id="CLU_125406_5_1_4"/>
<dbReference type="OrthoDB" id="9796300at2"/>
<dbReference type="Proteomes" id="UP000008210">
    <property type="component" value="Chromosome 1"/>
</dbReference>
<dbReference type="GO" id="GO:0000428">
    <property type="term" value="C:DNA-directed RNA polymerase complex"/>
    <property type="evidence" value="ECO:0007669"/>
    <property type="project" value="UniProtKB-KW"/>
</dbReference>
<dbReference type="GO" id="GO:0003677">
    <property type="term" value="F:DNA binding"/>
    <property type="evidence" value="ECO:0007669"/>
    <property type="project" value="UniProtKB-UniRule"/>
</dbReference>
<dbReference type="GO" id="GO:0003899">
    <property type="term" value="F:DNA-directed RNA polymerase activity"/>
    <property type="evidence" value="ECO:0007669"/>
    <property type="project" value="UniProtKB-UniRule"/>
</dbReference>
<dbReference type="GO" id="GO:0006351">
    <property type="term" value="P:DNA-templated transcription"/>
    <property type="evidence" value="ECO:0007669"/>
    <property type="project" value="UniProtKB-UniRule"/>
</dbReference>
<dbReference type="Gene3D" id="3.90.940.10">
    <property type="match status" value="1"/>
</dbReference>
<dbReference type="HAMAP" id="MF_00366">
    <property type="entry name" value="RNApol_bact_RpoZ"/>
    <property type="match status" value="1"/>
</dbReference>
<dbReference type="InterPro" id="IPR003716">
    <property type="entry name" value="DNA-dir_RNA_pol_omega"/>
</dbReference>
<dbReference type="InterPro" id="IPR006110">
    <property type="entry name" value="Pol_omega/Rpo6/RPB6"/>
</dbReference>
<dbReference type="InterPro" id="IPR036161">
    <property type="entry name" value="RPB6/omega-like_sf"/>
</dbReference>
<dbReference type="NCBIfam" id="TIGR00690">
    <property type="entry name" value="rpoZ"/>
    <property type="match status" value="1"/>
</dbReference>
<dbReference type="PANTHER" id="PTHR34476">
    <property type="entry name" value="DNA-DIRECTED RNA POLYMERASE SUBUNIT OMEGA"/>
    <property type="match status" value="1"/>
</dbReference>
<dbReference type="PANTHER" id="PTHR34476:SF1">
    <property type="entry name" value="DNA-DIRECTED RNA POLYMERASE SUBUNIT OMEGA"/>
    <property type="match status" value="1"/>
</dbReference>
<dbReference type="Pfam" id="PF01192">
    <property type="entry name" value="RNA_pol_Rpb6"/>
    <property type="match status" value="1"/>
</dbReference>
<dbReference type="SMART" id="SM01409">
    <property type="entry name" value="RNA_pol_Rpb6"/>
    <property type="match status" value="1"/>
</dbReference>
<dbReference type="SUPFAM" id="SSF63562">
    <property type="entry name" value="RPB6/omega subunit-like"/>
    <property type="match status" value="1"/>
</dbReference>
<keyword id="KW-0240">DNA-directed RNA polymerase</keyword>
<keyword id="KW-0548">Nucleotidyltransferase</keyword>
<keyword id="KW-1185">Reference proteome</keyword>
<keyword id="KW-0804">Transcription</keyword>
<keyword id="KW-0808">Transferase</keyword>
<evidence type="ECO:0000255" key="1">
    <source>
        <dbReference type="HAMAP-Rule" id="MF_00366"/>
    </source>
</evidence>
<proteinExistence type="inferred from homology"/>
<reference key="1">
    <citation type="journal article" date="2006" name="Nat. Biotechnol.">
        <title>Genome sequence of the bioplastic-producing 'Knallgas' bacterium Ralstonia eutropha H16.</title>
        <authorList>
            <person name="Pohlmann A."/>
            <person name="Fricke W.F."/>
            <person name="Reinecke F."/>
            <person name="Kusian B."/>
            <person name="Liesegang H."/>
            <person name="Cramm R."/>
            <person name="Eitinger T."/>
            <person name="Ewering C."/>
            <person name="Poetter M."/>
            <person name="Schwartz E."/>
            <person name="Strittmatter A."/>
            <person name="Voss I."/>
            <person name="Gottschalk G."/>
            <person name="Steinbuechel A."/>
            <person name="Friedrich B."/>
            <person name="Bowien B."/>
        </authorList>
    </citation>
    <scope>NUCLEOTIDE SEQUENCE [LARGE SCALE GENOMIC DNA]</scope>
    <source>
        <strain>ATCC 17699 / DSM 428 / KCTC 22496 / NCIMB 10442 / H16 / Stanier 337</strain>
    </source>
</reference>
<name>RPOZ_CUPNH</name>
<feature type="chain" id="PRO_1000005986" description="DNA-directed RNA polymerase subunit omega">
    <location>
        <begin position="1"/>
        <end position="67"/>
    </location>
</feature>
<gene>
    <name evidence="1" type="primary">rpoZ</name>
    <name type="ordered locus">H16_A0954</name>
</gene>
<comment type="function">
    <text evidence="1">Promotes RNA polymerase assembly. Latches the N- and C-terminal regions of the beta' subunit thereby facilitating its interaction with the beta and alpha subunits.</text>
</comment>
<comment type="catalytic activity">
    <reaction evidence="1">
        <text>RNA(n) + a ribonucleoside 5'-triphosphate = RNA(n+1) + diphosphate</text>
        <dbReference type="Rhea" id="RHEA:21248"/>
        <dbReference type="Rhea" id="RHEA-COMP:14527"/>
        <dbReference type="Rhea" id="RHEA-COMP:17342"/>
        <dbReference type="ChEBI" id="CHEBI:33019"/>
        <dbReference type="ChEBI" id="CHEBI:61557"/>
        <dbReference type="ChEBI" id="CHEBI:140395"/>
        <dbReference type="EC" id="2.7.7.6"/>
    </reaction>
</comment>
<comment type="subunit">
    <text evidence="1">The RNAP catalytic core consists of 2 alpha, 1 beta, 1 beta' and 1 omega subunit. When a sigma factor is associated with the core the holoenzyme is formed, which can initiate transcription.</text>
</comment>
<comment type="similarity">
    <text evidence="1">Belongs to the RNA polymerase subunit omega family.</text>
</comment>
<accession>Q0KD22</accession>